<feature type="chain" id="PRO_0000256387" description="1-deoxy-D-xylulose-5-phosphate synthase">
    <location>
        <begin position="1"/>
        <end position="634"/>
    </location>
</feature>
<feature type="binding site" evidence="1">
    <location>
        <position position="74"/>
    </location>
    <ligand>
        <name>thiamine diphosphate</name>
        <dbReference type="ChEBI" id="CHEBI:58937"/>
    </ligand>
</feature>
<feature type="binding site" evidence="1">
    <location>
        <begin position="115"/>
        <end position="117"/>
    </location>
    <ligand>
        <name>thiamine diphosphate</name>
        <dbReference type="ChEBI" id="CHEBI:58937"/>
    </ligand>
</feature>
<feature type="binding site" evidence="1">
    <location>
        <position position="146"/>
    </location>
    <ligand>
        <name>Mg(2+)</name>
        <dbReference type="ChEBI" id="CHEBI:18420"/>
    </ligand>
</feature>
<feature type="binding site" evidence="1">
    <location>
        <begin position="147"/>
        <end position="148"/>
    </location>
    <ligand>
        <name>thiamine diphosphate</name>
        <dbReference type="ChEBI" id="CHEBI:58937"/>
    </ligand>
</feature>
<feature type="binding site" evidence="1">
    <location>
        <position position="176"/>
    </location>
    <ligand>
        <name>Mg(2+)</name>
        <dbReference type="ChEBI" id="CHEBI:18420"/>
    </ligand>
</feature>
<feature type="binding site" evidence="1">
    <location>
        <position position="176"/>
    </location>
    <ligand>
        <name>thiamine diphosphate</name>
        <dbReference type="ChEBI" id="CHEBI:58937"/>
    </ligand>
</feature>
<feature type="binding site" evidence="1">
    <location>
        <position position="283"/>
    </location>
    <ligand>
        <name>thiamine diphosphate</name>
        <dbReference type="ChEBI" id="CHEBI:58937"/>
    </ligand>
</feature>
<feature type="binding site" evidence="1">
    <location>
        <position position="365"/>
    </location>
    <ligand>
        <name>thiamine diphosphate</name>
        <dbReference type="ChEBI" id="CHEBI:58937"/>
    </ligand>
</feature>
<reference key="1">
    <citation type="submission" date="2006-05" db="EMBL/GenBank/DDBJ databases">
        <title>Complete sequence of chromosome 2 of Burkholderia cenocepacia AU 1054.</title>
        <authorList>
            <consortium name="US DOE Joint Genome Institute"/>
            <person name="Copeland A."/>
            <person name="Lucas S."/>
            <person name="Lapidus A."/>
            <person name="Barry K."/>
            <person name="Detter J.C."/>
            <person name="Glavina del Rio T."/>
            <person name="Hammon N."/>
            <person name="Israni S."/>
            <person name="Dalin E."/>
            <person name="Tice H."/>
            <person name="Pitluck S."/>
            <person name="Chain P."/>
            <person name="Malfatti S."/>
            <person name="Shin M."/>
            <person name="Vergez L."/>
            <person name="Schmutz J."/>
            <person name="Larimer F."/>
            <person name="Land M."/>
            <person name="Hauser L."/>
            <person name="Kyrpides N."/>
            <person name="Lykidis A."/>
            <person name="LiPuma J.J."/>
            <person name="Konstantinidis K."/>
            <person name="Tiedje J.M."/>
            <person name="Richardson P."/>
        </authorList>
    </citation>
    <scope>NUCLEOTIDE SEQUENCE [LARGE SCALE GENOMIC DNA]</scope>
    <source>
        <strain>AU 1054</strain>
    </source>
</reference>
<organism>
    <name type="scientific">Burkholderia orbicola (strain AU 1054)</name>
    <dbReference type="NCBI Taxonomy" id="331271"/>
    <lineage>
        <taxon>Bacteria</taxon>
        <taxon>Pseudomonadati</taxon>
        <taxon>Pseudomonadota</taxon>
        <taxon>Betaproteobacteria</taxon>
        <taxon>Burkholderiales</taxon>
        <taxon>Burkholderiaceae</taxon>
        <taxon>Burkholderia</taxon>
        <taxon>Burkholderia cepacia complex</taxon>
        <taxon>Burkholderia orbicola</taxon>
    </lineage>
</organism>
<comment type="function">
    <text evidence="1">Catalyzes the acyloin condensation reaction between C atoms 2 and 3 of pyruvate and glyceraldehyde 3-phosphate to yield 1-deoxy-D-xylulose-5-phosphate (DXP).</text>
</comment>
<comment type="catalytic activity">
    <reaction evidence="1">
        <text>D-glyceraldehyde 3-phosphate + pyruvate + H(+) = 1-deoxy-D-xylulose 5-phosphate + CO2</text>
        <dbReference type="Rhea" id="RHEA:12605"/>
        <dbReference type="ChEBI" id="CHEBI:15361"/>
        <dbReference type="ChEBI" id="CHEBI:15378"/>
        <dbReference type="ChEBI" id="CHEBI:16526"/>
        <dbReference type="ChEBI" id="CHEBI:57792"/>
        <dbReference type="ChEBI" id="CHEBI:59776"/>
        <dbReference type="EC" id="2.2.1.7"/>
    </reaction>
</comment>
<comment type="cofactor">
    <cofactor evidence="1">
        <name>Mg(2+)</name>
        <dbReference type="ChEBI" id="CHEBI:18420"/>
    </cofactor>
    <text evidence="1">Binds 1 Mg(2+) ion per subunit.</text>
</comment>
<comment type="cofactor">
    <cofactor evidence="1">
        <name>thiamine diphosphate</name>
        <dbReference type="ChEBI" id="CHEBI:58937"/>
    </cofactor>
    <text evidence="1">Binds 1 thiamine pyrophosphate per subunit.</text>
</comment>
<comment type="pathway">
    <text evidence="1">Metabolic intermediate biosynthesis; 1-deoxy-D-xylulose 5-phosphate biosynthesis; 1-deoxy-D-xylulose 5-phosphate from D-glyceraldehyde 3-phosphate and pyruvate: step 1/1.</text>
</comment>
<comment type="subunit">
    <text evidence="1">Homodimer.</text>
</comment>
<comment type="similarity">
    <text evidence="1">Belongs to the transketolase family. DXPS subfamily.</text>
</comment>
<comment type="sequence caution" evidence="2">
    <conflict type="erroneous initiation">
        <sequence resource="EMBL-CDS" id="ABF79368"/>
    </conflict>
</comment>
<accession>Q1BLY7</accession>
<evidence type="ECO:0000255" key="1">
    <source>
        <dbReference type="HAMAP-Rule" id="MF_00315"/>
    </source>
</evidence>
<evidence type="ECO:0000305" key="2"/>
<keyword id="KW-0414">Isoprene biosynthesis</keyword>
<keyword id="KW-0460">Magnesium</keyword>
<keyword id="KW-0479">Metal-binding</keyword>
<keyword id="KW-0784">Thiamine biosynthesis</keyword>
<keyword id="KW-0786">Thiamine pyrophosphate</keyword>
<keyword id="KW-0808">Transferase</keyword>
<dbReference type="EC" id="2.2.1.7" evidence="1"/>
<dbReference type="EMBL" id="CP000379">
    <property type="protein sequence ID" value="ABF79368.1"/>
    <property type="status" value="ALT_INIT"/>
    <property type="molecule type" value="Genomic_DNA"/>
</dbReference>
<dbReference type="SMR" id="Q1BLY7"/>
<dbReference type="HOGENOM" id="CLU_009227_1_4_4"/>
<dbReference type="UniPathway" id="UPA00064">
    <property type="reaction ID" value="UER00091"/>
</dbReference>
<dbReference type="GO" id="GO:0005829">
    <property type="term" value="C:cytosol"/>
    <property type="evidence" value="ECO:0007669"/>
    <property type="project" value="TreeGrafter"/>
</dbReference>
<dbReference type="GO" id="GO:0008661">
    <property type="term" value="F:1-deoxy-D-xylulose-5-phosphate synthase activity"/>
    <property type="evidence" value="ECO:0007669"/>
    <property type="project" value="UniProtKB-UniRule"/>
</dbReference>
<dbReference type="GO" id="GO:0000287">
    <property type="term" value="F:magnesium ion binding"/>
    <property type="evidence" value="ECO:0007669"/>
    <property type="project" value="UniProtKB-UniRule"/>
</dbReference>
<dbReference type="GO" id="GO:0030976">
    <property type="term" value="F:thiamine pyrophosphate binding"/>
    <property type="evidence" value="ECO:0007669"/>
    <property type="project" value="UniProtKB-UniRule"/>
</dbReference>
<dbReference type="GO" id="GO:0052865">
    <property type="term" value="P:1-deoxy-D-xylulose 5-phosphate biosynthetic process"/>
    <property type="evidence" value="ECO:0007669"/>
    <property type="project" value="UniProtKB-UniPathway"/>
</dbReference>
<dbReference type="GO" id="GO:0019288">
    <property type="term" value="P:isopentenyl diphosphate biosynthetic process, methylerythritol 4-phosphate pathway"/>
    <property type="evidence" value="ECO:0007669"/>
    <property type="project" value="TreeGrafter"/>
</dbReference>
<dbReference type="GO" id="GO:0016114">
    <property type="term" value="P:terpenoid biosynthetic process"/>
    <property type="evidence" value="ECO:0007669"/>
    <property type="project" value="UniProtKB-UniRule"/>
</dbReference>
<dbReference type="GO" id="GO:0009228">
    <property type="term" value="P:thiamine biosynthetic process"/>
    <property type="evidence" value="ECO:0007669"/>
    <property type="project" value="UniProtKB-UniRule"/>
</dbReference>
<dbReference type="CDD" id="cd02007">
    <property type="entry name" value="TPP_DXS"/>
    <property type="match status" value="1"/>
</dbReference>
<dbReference type="CDD" id="cd07033">
    <property type="entry name" value="TPP_PYR_DXS_TK_like"/>
    <property type="match status" value="1"/>
</dbReference>
<dbReference type="FunFam" id="3.40.50.920:FF:000002">
    <property type="entry name" value="1-deoxy-D-xylulose-5-phosphate synthase"/>
    <property type="match status" value="1"/>
</dbReference>
<dbReference type="FunFam" id="3.40.50.970:FF:000005">
    <property type="entry name" value="1-deoxy-D-xylulose-5-phosphate synthase"/>
    <property type="match status" value="1"/>
</dbReference>
<dbReference type="Gene3D" id="3.40.50.920">
    <property type="match status" value="1"/>
</dbReference>
<dbReference type="Gene3D" id="3.40.50.970">
    <property type="match status" value="2"/>
</dbReference>
<dbReference type="HAMAP" id="MF_00315">
    <property type="entry name" value="DXP_synth"/>
    <property type="match status" value="1"/>
</dbReference>
<dbReference type="InterPro" id="IPR005477">
    <property type="entry name" value="Dxylulose-5-P_synthase"/>
</dbReference>
<dbReference type="InterPro" id="IPR029061">
    <property type="entry name" value="THDP-binding"/>
</dbReference>
<dbReference type="InterPro" id="IPR009014">
    <property type="entry name" value="Transketo_C/PFOR_II"/>
</dbReference>
<dbReference type="InterPro" id="IPR005475">
    <property type="entry name" value="Transketolase-like_Pyr-bd"/>
</dbReference>
<dbReference type="InterPro" id="IPR020826">
    <property type="entry name" value="Transketolase_BS"/>
</dbReference>
<dbReference type="InterPro" id="IPR033248">
    <property type="entry name" value="Transketolase_C"/>
</dbReference>
<dbReference type="InterPro" id="IPR049557">
    <property type="entry name" value="Transketolase_CS"/>
</dbReference>
<dbReference type="NCBIfam" id="TIGR00204">
    <property type="entry name" value="dxs"/>
    <property type="match status" value="1"/>
</dbReference>
<dbReference type="NCBIfam" id="NF003933">
    <property type="entry name" value="PRK05444.2-2"/>
    <property type="match status" value="1"/>
</dbReference>
<dbReference type="PANTHER" id="PTHR43322">
    <property type="entry name" value="1-D-DEOXYXYLULOSE 5-PHOSPHATE SYNTHASE-RELATED"/>
    <property type="match status" value="1"/>
</dbReference>
<dbReference type="PANTHER" id="PTHR43322:SF5">
    <property type="entry name" value="1-DEOXY-D-XYLULOSE-5-PHOSPHATE SYNTHASE, CHLOROPLASTIC"/>
    <property type="match status" value="1"/>
</dbReference>
<dbReference type="Pfam" id="PF13292">
    <property type="entry name" value="DXP_synthase_N"/>
    <property type="match status" value="1"/>
</dbReference>
<dbReference type="Pfam" id="PF02779">
    <property type="entry name" value="Transket_pyr"/>
    <property type="match status" value="1"/>
</dbReference>
<dbReference type="Pfam" id="PF02780">
    <property type="entry name" value="Transketolase_C"/>
    <property type="match status" value="1"/>
</dbReference>
<dbReference type="SMART" id="SM00861">
    <property type="entry name" value="Transket_pyr"/>
    <property type="match status" value="1"/>
</dbReference>
<dbReference type="SUPFAM" id="SSF52518">
    <property type="entry name" value="Thiamin diphosphate-binding fold (THDP-binding)"/>
    <property type="match status" value="2"/>
</dbReference>
<dbReference type="SUPFAM" id="SSF52922">
    <property type="entry name" value="TK C-terminal domain-like"/>
    <property type="match status" value="1"/>
</dbReference>
<dbReference type="PROSITE" id="PS00801">
    <property type="entry name" value="TRANSKETOLASE_1"/>
    <property type="match status" value="1"/>
</dbReference>
<dbReference type="PROSITE" id="PS00802">
    <property type="entry name" value="TRANSKETOLASE_2"/>
    <property type="match status" value="1"/>
</dbReference>
<proteinExistence type="inferred from homology"/>
<sequence>MYDLLKTIDDPADLRRLDRRQLQPLADELRAFVLDSVSKTGGHLSSNLGTVELTIALHYVFNTPNDRIVWDVGHQTYPHKILTGRRDQMHSLRQYDGISGFPRRSESEYDTFGTAHSSTSISAALGMAIGSQLNGDDRFSIAVIGDGAMTAGMAFEAMNNAGVSEDAKLLVILNDNDMSISPPVGALNRHLARLMSGRFYAAARAGVERVLSVAPPVLELARKLEEHAKGMVVPATLFEEFGFNYIGPIDGHDLDSLIPTLQNIRELRGPQFLHVVTKKGQGYKLAEADPVLYHGPGKFNPAEGIKPSTTPAKKTYTQVFGEWLCDEAERDTRVVGITPAMREGSGMVEFEKRFKDRYYDVGIAEQHAVTFAGGLATEGLKPVVAIYSTFLQRAYDQLIHDVALQNLPVVFAIDRAGLVGADGATHAGAYDLAFMRCIPNMTIMAASDENECRQMLHTALQQPNPTAVRYPRGAGTGVATVKEFTEIPLGKGEVRRRTSQPEGKRVAILAFGTMVAPSLAAAEELDATVANMRFVKPVDAALVRELAETHDYLVTVEEGCVMGGAGSACVEALMESGVIRPVLQLGLPDQFVDHGDHAKLLAQCGLDGAGIAKSIRERFLSPAADVAGHAKRVA</sequence>
<protein>
    <recommendedName>
        <fullName evidence="1">1-deoxy-D-xylulose-5-phosphate synthase</fullName>
        <ecNumber evidence="1">2.2.1.7</ecNumber>
    </recommendedName>
    <alternativeName>
        <fullName evidence="1">1-deoxyxylulose-5-phosphate synthase</fullName>
        <shortName evidence="1">DXP synthase</shortName>
        <shortName evidence="1">DXPS</shortName>
    </alternativeName>
</protein>
<name>DXS_BURO1</name>
<gene>
    <name evidence="1" type="primary">dxs</name>
    <name type="ordered locus">Bcen_4486</name>
</gene>